<feature type="chain" id="PRO_1000007502" description="Large ribosomal subunit protein uL29">
    <location>
        <begin position="1"/>
        <end position="63"/>
    </location>
</feature>
<accession>A6TEW4</accession>
<protein>
    <recommendedName>
        <fullName evidence="1">Large ribosomal subunit protein uL29</fullName>
    </recommendedName>
    <alternativeName>
        <fullName evidence="2">50S ribosomal protein L29</fullName>
    </alternativeName>
</protein>
<organism>
    <name type="scientific">Klebsiella pneumoniae subsp. pneumoniae (strain ATCC 700721 / MGH 78578)</name>
    <dbReference type="NCBI Taxonomy" id="272620"/>
    <lineage>
        <taxon>Bacteria</taxon>
        <taxon>Pseudomonadati</taxon>
        <taxon>Pseudomonadota</taxon>
        <taxon>Gammaproteobacteria</taxon>
        <taxon>Enterobacterales</taxon>
        <taxon>Enterobacteriaceae</taxon>
        <taxon>Klebsiella/Raoultella group</taxon>
        <taxon>Klebsiella</taxon>
        <taxon>Klebsiella pneumoniae complex</taxon>
    </lineage>
</organism>
<gene>
    <name evidence="1" type="primary">rpmC</name>
    <name type="ordered locus">KPN78578_36740</name>
    <name type="ORF">KPN_03711</name>
</gene>
<dbReference type="EMBL" id="CP000647">
    <property type="protein sequence ID" value="ABR79098.1"/>
    <property type="molecule type" value="Genomic_DNA"/>
</dbReference>
<dbReference type="RefSeq" id="WP_002919754.1">
    <property type="nucleotide sequence ID" value="NC_009648.1"/>
</dbReference>
<dbReference type="SMR" id="A6TEW4"/>
<dbReference type="STRING" id="272620.KPN_03711"/>
<dbReference type="jPOST" id="A6TEW4"/>
<dbReference type="PaxDb" id="272620-KPN_03711"/>
<dbReference type="EnsemblBacteria" id="ABR79098">
    <property type="protein sequence ID" value="ABR79098"/>
    <property type="gene ID" value="KPN_03711"/>
</dbReference>
<dbReference type="GeneID" id="98390434"/>
<dbReference type="KEGG" id="kpn:KPN_03711"/>
<dbReference type="HOGENOM" id="CLU_158491_1_2_6"/>
<dbReference type="Proteomes" id="UP000000265">
    <property type="component" value="Chromosome"/>
</dbReference>
<dbReference type="GO" id="GO:0022625">
    <property type="term" value="C:cytosolic large ribosomal subunit"/>
    <property type="evidence" value="ECO:0007669"/>
    <property type="project" value="TreeGrafter"/>
</dbReference>
<dbReference type="GO" id="GO:0003735">
    <property type="term" value="F:structural constituent of ribosome"/>
    <property type="evidence" value="ECO:0007669"/>
    <property type="project" value="InterPro"/>
</dbReference>
<dbReference type="GO" id="GO:0006412">
    <property type="term" value="P:translation"/>
    <property type="evidence" value="ECO:0007669"/>
    <property type="project" value="UniProtKB-UniRule"/>
</dbReference>
<dbReference type="CDD" id="cd00427">
    <property type="entry name" value="Ribosomal_L29_HIP"/>
    <property type="match status" value="1"/>
</dbReference>
<dbReference type="FunFam" id="1.10.287.310:FF:000001">
    <property type="entry name" value="50S ribosomal protein L29"/>
    <property type="match status" value="1"/>
</dbReference>
<dbReference type="Gene3D" id="1.10.287.310">
    <property type="match status" value="1"/>
</dbReference>
<dbReference type="HAMAP" id="MF_00374">
    <property type="entry name" value="Ribosomal_uL29"/>
    <property type="match status" value="1"/>
</dbReference>
<dbReference type="InterPro" id="IPR050063">
    <property type="entry name" value="Ribosomal_protein_uL29"/>
</dbReference>
<dbReference type="InterPro" id="IPR001854">
    <property type="entry name" value="Ribosomal_uL29"/>
</dbReference>
<dbReference type="InterPro" id="IPR018254">
    <property type="entry name" value="Ribosomal_uL29_CS"/>
</dbReference>
<dbReference type="InterPro" id="IPR036049">
    <property type="entry name" value="Ribosomal_uL29_sf"/>
</dbReference>
<dbReference type="NCBIfam" id="TIGR00012">
    <property type="entry name" value="L29"/>
    <property type="match status" value="1"/>
</dbReference>
<dbReference type="PANTHER" id="PTHR10916">
    <property type="entry name" value="60S RIBOSOMAL PROTEIN L35/50S RIBOSOMAL PROTEIN L29"/>
    <property type="match status" value="1"/>
</dbReference>
<dbReference type="PANTHER" id="PTHR10916:SF0">
    <property type="entry name" value="LARGE RIBOSOMAL SUBUNIT PROTEIN UL29C"/>
    <property type="match status" value="1"/>
</dbReference>
<dbReference type="Pfam" id="PF00831">
    <property type="entry name" value="Ribosomal_L29"/>
    <property type="match status" value="1"/>
</dbReference>
<dbReference type="SUPFAM" id="SSF46561">
    <property type="entry name" value="Ribosomal protein L29 (L29p)"/>
    <property type="match status" value="1"/>
</dbReference>
<dbReference type="PROSITE" id="PS00579">
    <property type="entry name" value="RIBOSOMAL_L29"/>
    <property type="match status" value="1"/>
</dbReference>
<name>RL29_KLEP7</name>
<comment type="similarity">
    <text evidence="1">Belongs to the universal ribosomal protein uL29 family.</text>
</comment>
<evidence type="ECO:0000255" key="1">
    <source>
        <dbReference type="HAMAP-Rule" id="MF_00374"/>
    </source>
</evidence>
<evidence type="ECO:0000305" key="2"/>
<sequence length="63" mass="7243">MKAKELREKSVEELNAELLNLLREQFNLRMQAASGQLQQTHLLKQVRRDVARVKTLLTQKAGA</sequence>
<reference key="1">
    <citation type="submission" date="2006-09" db="EMBL/GenBank/DDBJ databases">
        <authorList>
            <consortium name="The Klebsiella pneumonia Genome Sequencing Project"/>
            <person name="McClelland M."/>
            <person name="Sanderson E.K."/>
            <person name="Spieth J."/>
            <person name="Clifton W.S."/>
            <person name="Latreille P."/>
            <person name="Sabo A."/>
            <person name="Pepin K."/>
            <person name="Bhonagiri V."/>
            <person name="Porwollik S."/>
            <person name="Ali J."/>
            <person name="Wilson R.K."/>
        </authorList>
    </citation>
    <scope>NUCLEOTIDE SEQUENCE [LARGE SCALE GENOMIC DNA]</scope>
    <source>
        <strain>ATCC 700721 / MGH 78578</strain>
    </source>
</reference>
<keyword id="KW-0687">Ribonucleoprotein</keyword>
<keyword id="KW-0689">Ribosomal protein</keyword>
<proteinExistence type="inferred from homology"/>